<comment type="similarity">
    <text evidence="1">Belongs to the bacterial ribosomal protein bS21 family.</text>
</comment>
<reference key="1">
    <citation type="submission" date="2007-11" db="EMBL/GenBank/DDBJ databases">
        <authorList>
            <consortium name="The Salmonella enterica serovar Paratyphi B Genome Sequencing Project"/>
            <person name="McClelland M."/>
            <person name="Sanderson E.K."/>
            <person name="Porwollik S."/>
            <person name="Spieth J."/>
            <person name="Clifton W.S."/>
            <person name="Fulton R."/>
            <person name="Cordes M."/>
            <person name="Wollam A."/>
            <person name="Shah N."/>
            <person name="Pepin K."/>
            <person name="Bhonagiri V."/>
            <person name="Nash W."/>
            <person name="Johnson M."/>
            <person name="Thiruvilangam P."/>
            <person name="Wilson R."/>
        </authorList>
    </citation>
    <scope>NUCLEOTIDE SEQUENCE [LARGE SCALE GENOMIC DNA]</scope>
    <source>
        <strain>ATCC BAA-1250 / SPB7</strain>
    </source>
</reference>
<feature type="chain" id="PRO_1000079418" description="Small ribosomal subunit protein bS21">
    <location>
        <begin position="1"/>
        <end position="71"/>
    </location>
</feature>
<feature type="region of interest" description="Disordered" evidence="2">
    <location>
        <begin position="43"/>
        <end position="71"/>
    </location>
</feature>
<feature type="compositionally biased region" description="Basic residues" evidence="2">
    <location>
        <begin position="46"/>
        <end position="59"/>
    </location>
</feature>
<feature type="compositionally biased region" description="Basic and acidic residues" evidence="2">
    <location>
        <begin position="60"/>
        <end position="71"/>
    </location>
</feature>
<organism>
    <name type="scientific">Salmonella paratyphi B (strain ATCC BAA-1250 / SPB7)</name>
    <dbReference type="NCBI Taxonomy" id="1016998"/>
    <lineage>
        <taxon>Bacteria</taxon>
        <taxon>Pseudomonadati</taxon>
        <taxon>Pseudomonadota</taxon>
        <taxon>Gammaproteobacteria</taxon>
        <taxon>Enterobacterales</taxon>
        <taxon>Enterobacteriaceae</taxon>
        <taxon>Salmonella</taxon>
    </lineage>
</organism>
<name>RS21_SALPB</name>
<evidence type="ECO:0000255" key="1">
    <source>
        <dbReference type="HAMAP-Rule" id="MF_00358"/>
    </source>
</evidence>
<evidence type="ECO:0000256" key="2">
    <source>
        <dbReference type="SAM" id="MobiDB-lite"/>
    </source>
</evidence>
<evidence type="ECO:0000305" key="3"/>
<protein>
    <recommendedName>
        <fullName evidence="1">Small ribosomal subunit protein bS21</fullName>
    </recommendedName>
    <alternativeName>
        <fullName evidence="3">30S ribosomal protein S21</fullName>
    </alternativeName>
</protein>
<sequence>MPVIKVRENEPFDVALRRFKRSCEKAGVLAEVRRREFYEKPTTERKRAKASAVKRHAKKLARENARRTRLY</sequence>
<proteinExistence type="inferred from homology"/>
<dbReference type="EMBL" id="CP000886">
    <property type="protein sequence ID" value="ABX69334.1"/>
    <property type="molecule type" value="Genomic_DNA"/>
</dbReference>
<dbReference type="RefSeq" id="WP_001144069.1">
    <property type="nucleotide sequence ID" value="NC_010102.1"/>
</dbReference>
<dbReference type="SMR" id="A9N5Y8"/>
<dbReference type="GeneID" id="98390195"/>
<dbReference type="KEGG" id="spq:SPAB_04005"/>
<dbReference type="PATRIC" id="fig|1016998.12.peg.3776"/>
<dbReference type="HOGENOM" id="CLU_159258_1_0_6"/>
<dbReference type="BioCyc" id="SENT1016998:SPAB_RS16265-MONOMER"/>
<dbReference type="Proteomes" id="UP000008556">
    <property type="component" value="Chromosome"/>
</dbReference>
<dbReference type="GO" id="GO:1990904">
    <property type="term" value="C:ribonucleoprotein complex"/>
    <property type="evidence" value="ECO:0007669"/>
    <property type="project" value="UniProtKB-KW"/>
</dbReference>
<dbReference type="GO" id="GO:0005840">
    <property type="term" value="C:ribosome"/>
    <property type="evidence" value="ECO:0007669"/>
    <property type="project" value="UniProtKB-KW"/>
</dbReference>
<dbReference type="GO" id="GO:0003735">
    <property type="term" value="F:structural constituent of ribosome"/>
    <property type="evidence" value="ECO:0007669"/>
    <property type="project" value="InterPro"/>
</dbReference>
<dbReference type="GO" id="GO:0006412">
    <property type="term" value="P:translation"/>
    <property type="evidence" value="ECO:0007669"/>
    <property type="project" value="UniProtKB-UniRule"/>
</dbReference>
<dbReference type="FunFam" id="1.20.5.1150:FF:000001">
    <property type="entry name" value="30S ribosomal protein S21"/>
    <property type="match status" value="1"/>
</dbReference>
<dbReference type="Gene3D" id="1.20.5.1150">
    <property type="entry name" value="Ribosomal protein S8"/>
    <property type="match status" value="1"/>
</dbReference>
<dbReference type="HAMAP" id="MF_00358">
    <property type="entry name" value="Ribosomal_bS21"/>
    <property type="match status" value="1"/>
</dbReference>
<dbReference type="InterPro" id="IPR001911">
    <property type="entry name" value="Ribosomal_bS21"/>
</dbReference>
<dbReference type="InterPro" id="IPR018278">
    <property type="entry name" value="Ribosomal_bS21_CS"/>
</dbReference>
<dbReference type="InterPro" id="IPR038380">
    <property type="entry name" value="Ribosomal_bS21_sf"/>
</dbReference>
<dbReference type="NCBIfam" id="TIGR00030">
    <property type="entry name" value="S21p"/>
    <property type="match status" value="1"/>
</dbReference>
<dbReference type="PANTHER" id="PTHR21109">
    <property type="entry name" value="MITOCHONDRIAL 28S RIBOSOMAL PROTEIN S21"/>
    <property type="match status" value="1"/>
</dbReference>
<dbReference type="PANTHER" id="PTHR21109:SF22">
    <property type="entry name" value="SMALL RIBOSOMAL SUBUNIT PROTEIN BS21"/>
    <property type="match status" value="1"/>
</dbReference>
<dbReference type="Pfam" id="PF01165">
    <property type="entry name" value="Ribosomal_S21"/>
    <property type="match status" value="1"/>
</dbReference>
<dbReference type="PRINTS" id="PR00976">
    <property type="entry name" value="RIBOSOMALS21"/>
</dbReference>
<dbReference type="PROSITE" id="PS01181">
    <property type="entry name" value="RIBOSOMAL_S21"/>
    <property type="match status" value="1"/>
</dbReference>
<accession>A9N5Y8</accession>
<keyword id="KW-0687">Ribonucleoprotein</keyword>
<keyword id="KW-0689">Ribosomal protein</keyword>
<gene>
    <name evidence="1" type="primary">rpsU</name>
    <name type="ordered locus">SPAB_04005</name>
</gene>